<sequence>MSVSMDHRVLALAGVAQALQQVRRIAETGHSEAATVRTAMDSVFRVDAASPEAVYGSAAALAPGLRLLHNYFRNQGQDEVLPRLALAVLQLERRFVRDASTVATVASGIDAAARQAQQLGDSSHPDVLGSLGGLYAQTISHLRPKVMVQGNPHYLGQAGVVAEIRALLLAALRSAVLWRQMGGSLWDFLFAKRAMIEAVDRALR</sequence>
<protein>
    <recommendedName>
        <fullName evidence="1">High frequency lysogenization protein HflD homolog</fullName>
    </recommendedName>
</protein>
<dbReference type="EMBL" id="AE008923">
    <property type="protein sequence ID" value="AAM36859.1"/>
    <property type="molecule type" value="Genomic_DNA"/>
</dbReference>
<dbReference type="RefSeq" id="WP_007964280.1">
    <property type="nucleotide sequence ID" value="NC_003919.1"/>
</dbReference>
<dbReference type="SMR" id="Q8PL09"/>
<dbReference type="GeneID" id="66911133"/>
<dbReference type="KEGG" id="xac:XAC1997"/>
<dbReference type="eggNOG" id="COG2915">
    <property type="taxonomic scope" value="Bacteria"/>
</dbReference>
<dbReference type="HOGENOM" id="CLU_098920_0_0_6"/>
<dbReference type="Proteomes" id="UP000000576">
    <property type="component" value="Chromosome"/>
</dbReference>
<dbReference type="GO" id="GO:0005737">
    <property type="term" value="C:cytoplasm"/>
    <property type="evidence" value="ECO:0007669"/>
    <property type="project" value="UniProtKB-SubCell"/>
</dbReference>
<dbReference type="GO" id="GO:0005886">
    <property type="term" value="C:plasma membrane"/>
    <property type="evidence" value="ECO:0007669"/>
    <property type="project" value="UniProtKB-SubCell"/>
</dbReference>
<dbReference type="Gene3D" id="1.10.3890.10">
    <property type="entry name" value="HflD-like"/>
    <property type="match status" value="1"/>
</dbReference>
<dbReference type="HAMAP" id="MF_00695">
    <property type="entry name" value="HflD_protein"/>
    <property type="match status" value="1"/>
</dbReference>
<dbReference type="InterPro" id="IPR007451">
    <property type="entry name" value="HflD"/>
</dbReference>
<dbReference type="InterPro" id="IPR035932">
    <property type="entry name" value="HflD-like_sf"/>
</dbReference>
<dbReference type="NCBIfam" id="NF001246">
    <property type="entry name" value="PRK00218.1-2"/>
    <property type="match status" value="1"/>
</dbReference>
<dbReference type="NCBIfam" id="NF001250">
    <property type="entry name" value="PRK00218.1-6"/>
    <property type="match status" value="1"/>
</dbReference>
<dbReference type="PANTHER" id="PTHR38100">
    <property type="entry name" value="HIGH FREQUENCY LYSOGENIZATION PROTEIN HFLD"/>
    <property type="match status" value="1"/>
</dbReference>
<dbReference type="PANTHER" id="PTHR38100:SF1">
    <property type="entry name" value="HIGH FREQUENCY LYSOGENIZATION PROTEIN HFLD"/>
    <property type="match status" value="1"/>
</dbReference>
<dbReference type="Pfam" id="PF04356">
    <property type="entry name" value="DUF489"/>
    <property type="match status" value="1"/>
</dbReference>
<dbReference type="SUPFAM" id="SSF101322">
    <property type="entry name" value="YcfC-like"/>
    <property type="match status" value="1"/>
</dbReference>
<name>HFLD_XANAC</name>
<reference key="1">
    <citation type="journal article" date="2002" name="Nature">
        <title>Comparison of the genomes of two Xanthomonas pathogens with differing host specificities.</title>
        <authorList>
            <person name="da Silva A.C.R."/>
            <person name="Ferro J.A."/>
            <person name="Reinach F.C."/>
            <person name="Farah C.S."/>
            <person name="Furlan L.R."/>
            <person name="Quaggio R.B."/>
            <person name="Monteiro-Vitorello C.B."/>
            <person name="Van Sluys M.A."/>
            <person name="Almeida N.F. Jr."/>
            <person name="Alves L.M.C."/>
            <person name="do Amaral A.M."/>
            <person name="Bertolini M.C."/>
            <person name="Camargo L.E.A."/>
            <person name="Camarotte G."/>
            <person name="Cannavan F."/>
            <person name="Cardozo J."/>
            <person name="Chambergo F."/>
            <person name="Ciapina L.P."/>
            <person name="Cicarelli R.M.B."/>
            <person name="Coutinho L.L."/>
            <person name="Cursino-Santos J.R."/>
            <person name="El-Dorry H."/>
            <person name="Faria J.B."/>
            <person name="Ferreira A.J.S."/>
            <person name="Ferreira R.C.C."/>
            <person name="Ferro M.I.T."/>
            <person name="Formighieri E.F."/>
            <person name="Franco M.C."/>
            <person name="Greggio C.C."/>
            <person name="Gruber A."/>
            <person name="Katsuyama A.M."/>
            <person name="Kishi L.T."/>
            <person name="Leite R.P."/>
            <person name="Lemos E.G.M."/>
            <person name="Lemos M.V.F."/>
            <person name="Locali E.C."/>
            <person name="Machado M.A."/>
            <person name="Madeira A.M.B.N."/>
            <person name="Martinez-Rossi N.M."/>
            <person name="Martins E.C."/>
            <person name="Meidanis J."/>
            <person name="Menck C.F.M."/>
            <person name="Miyaki C.Y."/>
            <person name="Moon D.H."/>
            <person name="Moreira L.M."/>
            <person name="Novo M.T.M."/>
            <person name="Okura V.K."/>
            <person name="Oliveira M.C."/>
            <person name="Oliveira V.R."/>
            <person name="Pereira H.A."/>
            <person name="Rossi A."/>
            <person name="Sena J.A.D."/>
            <person name="Silva C."/>
            <person name="de Souza R.F."/>
            <person name="Spinola L.A.F."/>
            <person name="Takita M.A."/>
            <person name="Tamura R.E."/>
            <person name="Teixeira E.C."/>
            <person name="Tezza R.I.D."/>
            <person name="Trindade dos Santos M."/>
            <person name="Truffi D."/>
            <person name="Tsai S.M."/>
            <person name="White F.F."/>
            <person name="Setubal J.C."/>
            <person name="Kitajima J.P."/>
        </authorList>
    </citation>
    <scope>NUCLEOTIDE SEQUENCE [LARGE SCALE GENOMIC DNA]</scope>
    <source>
        <strain>306</strain>
    </source>
</reference>
<organism>
    <name type="scientific">Xanthomonas axonopodis pv. citri (strain 306)</name>
    <dbReference type="NCBI Taxonomy" id="190486"/>
    <lineage>
        <taxon>Bacteria</taxon>
        <taxon>Pseudomonadati</taxon>
        <taxon>Pseudomonadota</taxon>
        <taxon>Gammaproteobacteria</taxon>
        <taxon>Lysobacterales</taxon>
        <taxon>Lysobacteraceae</taxon>
        <taxon>Xanthomonas</taxon>
    </lineage>
</organism>
<proteinExistence type="inferred from homology"/>
<evidence type="ECO:0000255" key="1">
    <source>
        <dbReference type="HAMAP-Rule" id="MF_00695"/>
    </source>
</evidence>
<accession>Q8PL09</accession>
<comment type="subcellular location">
    <subcellularLocation>
        <location>Cytoplasm</location>
    </subcellularLocation>
    <subcellularLocation>
        <location evidence="1">Cell inner membrane</location>
        <topology evidence="1">Peripheral membrane protein</topology>
        <orientation evidence="1">Cytoplasmic side</orientation>
    </subcellularLocation>
</comment>
<comment type="similarity">
    <text evidence="1">Belongs to the HflD family.</text>
</comment>
<keyword id="KW-0997">Cell inner membrane</keyword>
<keyword id="KW-1003">Cell membrane</keyword>
<keyword id="KW-0963">Cytoplasm</keyword>
<keyword id="KW-0472">Membrane</keyword>
<gene>
    <name evidence="1" type="primary">hflD</name>
    <name type="ordered locus">XAC1997</name>
</gene>
<feature type="chain" id="PRO_0000071594" description="High frequency lysogenization protein HflD homolog">
    <location>
        <begin position="1"/>
        <end position="204"/>
    </location>
</feature>